<sequence>MDFYPIAIEKLIEEFAKLPGIGYKTAQRLTLYVLNLPKEEVKEFSEALVKARGTIKYCSVCGNFTDKDPCAICSNPNRNKSIICVIEQPKDIMSMEKIREYNGVYHVLHGNISPMAGRGPEDIKLKELIRRIDGSVNEVIVATNPNVEGEATAMYISKILKPLGVKVTRIAHGVPVGGDLEYADEVTLAKALEGRIEL</sequence>
<proteinExistence type="inferred from homology"/>
<feature type="chain" id="PRO_1000001528" description="Recombination protein RecR">
    <location>
        <begin position="1"/>
        <end position="198"/>
    </location>
</feature>
<feature type="domain" description="Toprim" evidence="1">
    <location>
        <begin position="81"/>
        <end position="175"/>
    </location>
</feature>
<feature type="zinc finger region" description="C4-type" evidence="1">
    <location>
        <begin position="58"/>
        <end position="73"/>
    </location>
</feature>
<dbReference type="EMBL" id="CP000727">
    <property type="protein sequence ID" value="ABS39146.1"/>
    <property type="molecule type" value="Genomic_DNA"/>
</dbReference>
<dbReference type="EMBL" id="AM412317">
    <property type="protein sequence ID" value="CAL81586.1"/>
    <property type="molecule type" value="Genomic_DNA"/>
</dbReference>
<dbReference type="RefSeq" id="WP_003359478.1">
    <property type="nucleotide sequence ID" value="NC_009698.1"/>
</dbReference>
<dbReference type="RefSeq" id="YP_001252581.1">
    <property type="nucleotide sequence ID" value="NC_009495.1"/>
</dbReference>
<dbReference type="RefSeq" id="YP_001385992.1">
    <property type="nucleotide sequence ID" value="NC_009698.1"/>
</dbReference>
<dbReference type="SMR" id="A5HXS8"/>
<dbReference type="GeneID" id="5187947"/>
<dbReference type="KEGG" id="cbh:CLC_0053"/>
<dbReference type="KEGG" id="cbo:CBO0033"/>
<dbReference type="PATRIC" id="fig|413999.7.peg.31"/>
<dbReference type="HOGENOM" id="CLU_060739_1_0_9"/>
<dbReference type="PRO" id="PR:A5HXS8"/>
<dbReference type="Proteomes" id="UP000001986">
    <property type="component" value="Chromosome"/>
</dbReference>
<dbReference type="GO" id="GO:0003677">
    <property type="term" value="F:DNA binding"/>
    <property type="evidence" value="ECO:0007669"/>
    <property type="project" value="UniProtKB-UniRule"/>
</dbReference>
<dbReference type="GO" id="GO:0008270">
    <property type="term" value="F:zinc ion binding"/>
    <property type="evidence" value="ECO:0007669"/>
    <property type="project" value="UniProtKB-KW"/>
</dbReference>
<dbReference type="GO" id="GO:0006302">
    <property type="term" value="P:double-strand break repair"/>
    <property type="evidence" value="ECO:0000318"/>
    <property type="project" value="GO_Central"/>
</dbReference>
<dbReference type="GO" id="GO:0000725">
    <property type="term" value="P:recombinational repair"/>
    <property type="evidence" value="ECO:0000318"/>
    <property type="project" value="GO_Central"/>
</dbReference>
<dbReference type="CDD" id="cd01025">
    <property type="entry name" value="TOPRIM_recR"/>
    <property type="match status" value="1"/>
</dbReference>
<dbReference type="Gene3D" id="3.30.60.80">
    <property type="match status" value="1"/>
</dbReference>
<dbReference type="Gene3D" id="3.40.1360.10">
    <property type="match status" value="1"/>
</dbReference>
<dbReference type="Gene3D" id="6.10.250.240">
    <property type="match status" value="1"/>
</dbReference>
<dbReference type="Gene3D" id="1.10.8.420">
    <property type="entry name" value="RecR Domain 1"/>
    <property type="match status" value="1"/>
</dbReference>
<dbReference type="HAMAP" id="MF_00017">
    <property type="entry name" value="RecR"/>
    <property type="match status" value="1"/>
</dbReference>
<dbReference type="InterPro" id="IPR000093">
    <property type="entry name" value="DNA_Rcmb_RecR"/>
</dbReference>
<dbReference type="InterPro" id="IPR023627">
    <property type="entry name" value="Rcmb_RecR"/>
</dbReference>
<dbReference type="InterPro" id="IPR015967">
    <property type="entry name" value="Rcmb_RecR_Znf"/>
</dbReference>
<dbReference type="InterPro" id="IPR006171">
    <property type="entry name" value="TOPRIM_dom"/>
</dbReference>
<dbReference type="InterPro" id="IPR034137">
    <property type="entry name" value="TOPRIM_RecR"/>
</dbReference>
<dbReference type="NCBIfam" id="TIGR00615">
    <property type="entry name" value="recR"/>
    <property type="match status" value="1"/>
</dbReference>
<dbReference type="PANTHER" id="PTHR30446">
    <property type="entry name" value="RECOMBINATION PROTEIN RECR"/>
    <property type="match status" value="1"/>
</dbReference>
<dbReference type="PANTHER" id="PTHR30446:SF0">
    <property type="entry name" value="RECOMBINATION PROTEIN RECR"/>
    <property type="match status" value="1"/>
</dbReference>
<dbReference type="Pfam" id="PF21175">
    <property type="entry name" value="RecR_C"/>
    <property type="match status" value="1"/>
</dbReference>
<dbReference type="Pfam" id="PF21176">
    <property type="entry name" value="RecR_HhH"/>
    <property type="match status" value="1"/>
</dbReference>
<dbReference type="Pfam" id="PF02132">
    <property type="entry name" value="RecR_ZnF"/>
    <property type="match status" value="1"/>
</dbReference>
<dbReference type="Pfam" id="PF13662">
    <property type="entry name" value="Toprim_4"/>
    <property type="match status" value="1"/>
</dbReference>
<dbReference type="SMART" id="SM00493">
    <property type="entry name" value="TOPRIM"/>
    <property type="match status" value="1"/>
</dbReference>
<dbReference type="SUPFAM" id="SSF111304">
    <property type="entry name" value="Recombination protein RecR"/>
    <property type="match status" value="1"/>
</dbReference>
<dbReference type="PROSITE" id="PS01300">
    <property type="entry name" value="RECR"/>
    <property type="match status" value="1"/>
</dbReference>
<dbReference type="PROSITE" id="PS50880">
    <property type="entry name" value="TOPRIM"/>
    <property type="match status" value="1"/>
</dbReference>
<gene>
    <name evidence="1" type="primary">recR</name>
    <name type="ordered locus">CBO0033</name>
    <name type="ordered locus">CLC_0053</name>
</gene>
<protein>
    <recommendedName>
        <fullName evidence="1">Recombination protein RecR</fullName>
    </recommendedName>
</protein>
<organism>
    <name type="scientific">Clostridium botulinum (strain Hall / ATCC 3502 / NCTC 13319 / Type A)</name>
    <dbReference type="NCBI Taxonomy" id="441771"/>
    <lineage>
        <taxon>Bacteria</taxon>
        <taxon>Bacillati</taxon>
        <taxon>Bacillota</taxon>
        <taxon>Clostridia</taxon>
        <taxon>Eubacteriales</taxon>
        <taxon>Clostridiaceae</taxon>
        <taxon>Clostridium</taxon>
    </lineage>
</organism>
<comment type="function">
    <text evidence="1">May play a role in DNA repair. It seems to be involved in an RecBC-independent recombinational process of DNA repair. It may act with RecF and RecO.</text>
</comment>
<comment type="similarity">
    <text evidence="1">Belongs to the RecR family.</text>
</comment>
<keyword id="KW-0227">DNA damage</keyword>
<keyword id="KW-0233">DNA recombination</keyword>
<keyword id="KW-0234">DNA repair</keyword>
<keyword id="KW-0479">Metal-binding</keyword>
<keyword id="KW-1185">Reference proteome</keyword>
<keyword id="KW-0862">Zinc</keyword>
<keyword id="KW-0863">Zinc-finger</keyword>
<accession>A5HXS8</accession>
<accession>A7FZV4</accession>
<evidence type="ECO:0000255" key="1">
    <source>
        <dbReference type="HAMAP-Rule" id="MF_00017"/>
    </source>
</evidence>
<reference key="1">
    <citation type="journal article" date="2007" name="Genome Res.">
        <title>Genome sequence of a proteolytic (Group I) Clostridium botulinum strain Hall A and comparative analysis of the clostridial genomes.</title>
        <authorList>
            <person name="Sebaihia M."/>
            <person name="Peck M.W."/>
            <person name="Minton N.P."/>
            <person name="Thomson N.R."/>
            <person name="Holden M.T.G."/>
            <person name="Mitchell W.J."/>
            <person name="Carter A.T."/>
            <person name="Bentley S.D."/>
            <person name="Mason D.R."/>
            <person name="Crossman L."/>
            <person name="Paul C.J."/>
            <person name="Ivens A."/>
            <person name="Wells-Bennik M.H.J."/>
            <person name="Davis I.J."/>
            <person name="Cerdeno-Tarraga A.M."/>
            <person name="Churcher C."/>
            <person name="Quail M.A."/>
            <person name="Chillingworth T."/>
            <person name="Feltwell T."/>
            <person name="Fraser A."/>
            <person name="Goodhead I."/>
            <person name="Hance Z."/>
            <person name="Jagels K."/>
            <person name="Larke N."/>
            <person name="Maddison M."/>
            <person name="Moule S."/>
            <person name="Mungall K."/>
            <person name="Norbertczak H."/>
            <person name="Rabbinowitsch E."/>
            <person name="Sanders M."/>
            <person name="Simmonds M."/>
            <person name="White B."/>
            <person name="Whithead S."/>
            <person name="Parkhill J."/>
        </authorList>
    </citation>
    <scope>NUCLEOTIDE SEQUENCE [LARGE SCALE GENOMIC DNA]</scope>
    <source>
        <strain>Hall / ATCC 3502 / NCTC 13319 / Type A</strain>
    </source>
</reference>
<reference key="2">
    <citation type="journal article" date="2007" name="PLoS ONE">
        <title>Analysis of the neurotoxin complex genes in Clostridium botulinum A1-A4 and B1 strains: BoNT/A3, /Ba4 and /B1 clusters are located within plasmids.</title>
        <authorList>
            <person name="Smith T.J."/>
            <person name="Hill K.K."/>
            <person name="Foley B.T."/>
            <person name="Detter J.C."/>
            <person name="Munk A.C."/>
            <person name="Bruce D.C."/>
            <person name="Doggett N.A."/>
            <person name="Smith L.A."/>
            <person name="Marks J.D."/>
            <person name="Xie G."/>
            <person name="Brettin T.S."/>
        </authorList>
    </citation>
    <scope>NUCLEOTIDE SEQUENCE [LARGE SCALE GENOMIC DNA]</scope>
    <source>
        <strain>Hall / ATCC 3502 / NCTC 13319 / Type A</strain>
    </source>
</reference>
<name>RECR_CLOBH</name>